<reference key="1">
    <citation type="journal article" date="2003" name="Plant Sci.">
        <title>Cloning and characterization of two fructokinases from maize.</title>
        <authorList>
            <person name="Zhang S."/>
            <person name="Nichols S.E."/>
            <person name="Dong J.G."/>
        </authorList>
    </citation>
    <scope>NUCLEOTIDE SEQUENCE [MRNA]</scope>
    <scope>BIOPHYSICOCHEMICAL PROPERTIES</scope>
    <scope>TISSUE SPECIFICITY</scope>
    <scope>DEVELOPMENTAL STAGE</scope>
</reference>
<organism>
    <name type="scientific">Zea mays</name>
    <name type="common">Maize</name>
    <dbReference type="NCBI Taxonomy" id="4577"/>
    <lineage>
        <taxon>Eukaryota</taxon>
        <taxon>Viridiplantae</taxon>
        <taxon>Streptophyta</taxon>
        <taxon>Embryophyta</taxon>
        <taxon>Tracheophyta</taxon>
        <taxon>Spermatophyta</taxon>
        <taxon>Magnoliopsida</taxon>
        <taxon>Liliopsida</taxon>
        <taxon>Poales</taxon>
        <taxon>Poaceae</taxon>
        <taxon>PACMAD clade</taxon>
        <taxon>Panicoideae</taxon>
        <taxon>Andropogonodae</taxon>
        <taxon>Andropogoneae</taxon>
        <taxon>Tripsacinae</taxon>
        <taxon>Zea</taxon>
    </lineage>
</organism>
<proteinExistence type="evidence at protein level"/>
<evidence type="ECO:0000269" key="1">
    <source ref="1"/>
</evidence>
<evidence type="ECO:0000305" key="2"/>
<keyword id="KW-0067">ATP-binding</keyword>
<keyword id="KW-0119">Carbohydrate metabolism</keyword>
<keyword id="KW-0418">Kinase</keyword>
<keyword id="KW-0547">Nucleotide-binding</keyword>
<keyword id="KW-1185">Reference proteome</keyword>
<keyword id="KW-0808">Transferase</keyword>
<name>SCRK1_MAIZE</name>
<sequence length="323" mass="34691">MAAGRELVVSFGEMLIDFVPTVAGVSLAEAPAFLKAPGGAPANVAIAVSRLGGGAAFVGKLGDDEFGRMLAAILRDNGVDDGGVVFDSGARTALAFVTLRADGEREFMFYRNPSADMLLTADELNVELIKRAAVFHYGSISLIAEPCRTAHLRAMEIAKEAGALLSYDPNLREALWPSREEARTQILSIWDQADIVKVSEVELEFLTGIDSVEDDVVMKLWRPTMKLLLVTLGDQGCKYYARDFHGAVPSFKVQQVDTTGAGDAFVGALLQRIVKDPSSLQDEKKLVESIKFANACGAITTTKKGAIPSLPTEAEVLQLIEKA</sequence>
<accession>Q6XZ79</accession>
<dbReference type="EC" id="2.7.1.4"/>
<dbReference type="EMBL" id="AY197772">
    <property type="protein sequence ID" value="AAP42805.1"/>
    <property type="molecule type" value="mRNA"/>
</dbReference>
<dbReference type="RefSeq" id="NP_001105210.1">
    <property type="nucleotide sequence ID" value="NM_001111740.1"/>
</dbReference>
<dbReference type="SMR" id="Q6XZ79"/>
<dbReference type="FunCoup" id="Q6XZ79">
    <property type="interactions" value="328"/>
</dbReference>
<dbReference type="STRING" id="4577.Q6XZ79"/>
<dbReference type="PaxDb" id="4577-GRMZM2G086845_P01"/>
<dbReference type="ProMEX" id="Q6XZ79"/>
<dbReference type="EnsemblPlants" id="Zm00001eb144910_T001">
    <property type="protein sequence ID" value="Zm00001eb144910_P001"/>
    <property type="gene ID" value="Zm00001eb144910"/>
</dbReference>
<dbReference type="GeneID" id="542107"/>
<dbReference type="Gramene" id="Zm00001eb144910_T001">
    <property type="protein sequence ID" value="Zm00001eb144910_P001"/>
    <property type="gene ID" value="Zm00001eb144910"/>
</dbReference>
<dbReference type="KEGG" id="zma:542107"/>
<dbReference type="eggNOG" id="KOG2855">
    <property type="taxonomic scope" value="Eukaryota"/>
</dbReference>
<dbReference type="InParanoid" id="Q6XZ79"/>
<dbReference type="OrthoDB" id="415590at2759"/>
<dbReference type="BRENDA" id="2.7.1.4">
    <property type="organism ID" value="6752"/>
</dbReference>
<dbReference type="UniPathway" id="UPA00152"/>
<dbReference type="Proteomes" id="UP000007305">
    <property type="component" value="Chromosome 3"/>
</dbReference>
<dbReference type="ExpressionAtlas" id="Q6XZ79">
    <property type="expression patterns" value="baseline and differential"/>
</dbReference>
<dbReference type="GO" id="GO:0005829">
    <property type="term" value="C:cytosol"/>
    <property type="evidence" value="ECO:0000318"/>
    <property type="project" value="GO_Central"/>
</dbReference>
<dbReference type="GO" id="GO:0005524">
    <property type="term" value="F:ATP binding"/>
    <property type="evidence" value="ECO:0007669"/>
    <property type="project" value="UniProtKB-KW"/>
</dbReference>
<dbReference type="GO" id="GO:0008865">
    <property type="term" value="F:fructokinase activity"/>
    <property type="evidence" value="ECO:0000318"/>
    <property type="project" value="GO_Central"/>
</dbReference>
<dbReference type="GO" id="GO:0006000">
    <property type="term" value="P:fructose metabolic process"/>
    <property type="evidence" value="ECO:0000318"/>
    <property type="project" value="GO_Central"/>
</dbReference>
<dbReference type="GO" id="GO:0019252">
    <property type="term" value="P:starch biosynthetic process"/>
    <property type="evidence" value="ECO:0007669"/>
    <property type="project" value="UniProtKB-UniPathway"/>
</dbReference>
<dbReference type="CDD" id="cd01167">
    <property type="entry name" value="bac_FRK"/>
    <property type="match status" value="1"/>
</dbReference>
<dbReference type="FunFam" id="3.40.1190.20:FF:000005">
    <property type="entry name" value="Probable fructokinase-2"/>
    <property type="match status" value="1"/>
</dbReference>
<dbReference type="Gene3D" id="3.40.1190.20">
    <property type="match status" value="1"/>
</dbReference>
<dbReference type="InterPro" id="IPR002173">
    <property type="entry name" value="Carboh/pur_kinase_PfkB_CS"/>
</dbReference>
<dbReference type="InterPro" id="IPR050306">
    <property type="entry name" value="PfkB_Carbo_kinase"/>
</dbReference>
<dbReference type="InterPro" id="IPR011611">
    <property type="entry name" value="PfkB_dom"/>
</dbReference>
<dbReference type="InterPro" id="IPR002139">
    <property type="entry name" value="Ribo/fructo_kinase"/>
</dbReference>
<dbReference type="InterPro" id="IPR029056">
    <property type="entry name" value="Ribokinase-like"/>
</dbReference>
<dbReference type="PANTHER" id="PTHR43085:SF24">
    <property type="entry name" value="FRUCTOKINASE-4-RELATED"/>
    <property type="match status" value="1"/>
</dbReference>
<dbReference type="PANTHER" id="PTHR43085">
    <property type="entry name" value="HEXOKINASE FAMILY MEMBER"/>
    <property type="match status" value="1"/>
</dbReference>
<dbReference type="Pfam" id="PF00294">
    <property type="entry name" value="PfkB"/>
    <property type="match status" value="1"/>
</dbReference>
<dbReference type="PRINTS" id="PR00990">
    <property type="entry name" value="RIBOKINASE"/>
</dbReference>
<dbReference type="SUPFAM" id="SSF53613">
    <property type="entry name" value="Ribokinase-like"/>
    <property type="match status" value="1"/>
</dbReference>
<dbReference type="PROSITE" id="PS00583">
    <property type="entry name" value="PFKB_KINASES_1"/>
    <property type="match status" value="1"/>
</dbReference>
<dbReference type="PROSITE" id="PS00584">
    <property type="entry name" value="PFKB_KINASES_2"/>
    <property type="match status" value="1"/>
</dbReference>
<feature type="chain" id="PRO_0000234066" description="Fructokinase-1">
    <location>
        <begin position="1"/>
        <end position="323"/>
    </location>
</feature>
<protein>
    <recommendedName>
        <fullName>Fructokinase-1</fullName>
        <ecNumber>2.7.1.4</ecNumber>
    </recommendedName>
    <alternativeName>
        <fullName>ZmFRK1</fullName>
    </alternativeName>
</protein>
<comment type="function">
    <text>May play an important role in maintaining the flux of carbon towards starch formation in endosperm. May also be involved in a sugar-sensing pathway.</text>
</comment>
<comment type="catalytic activity">
    <reaction>
        <text>D-fructose + ATP = D-fructose 6-phosphate + ADP + H(+)</text>
        <dbReference type="Rhea" id="RHEA:16125"/>
        <dbReference type="ChEBI" id="CHEBI:15378"/>
        <dbReference type="ChEBI" id="CHEBI:30616"/>
        <dbReference type="ChEBI" id="CHEBI:37721"/>
        <dbReference type="ChEBI" id="CHEBI:61527"/>
        <dbReference type="ChEBI" id="CHEBI:456216"/>
        <dbReference type="EC" id="2.7.1.4"/>
    </reaction>
</comment>
<comment type="activity regulation">
    <text>Inhibited at high fructose.</text>
</comment>
<comment type="biophysicochemical properties">
    <kinetics>
        <KM evidence="1">0.159 mM for fructose</KM>
        <KM evidence="1">0.024 mM for ATP</KM>
        <KM evidence="1">0.491 mM for UTP</KM>
        <Vmax evidence="1">15400.0 umol/min/mg enzyme</Vmax>
    </kinetics>
</comment>
<comment type="pathway">
    <text>Glycan biosynthesis; starch biosynthesis.</text>
</comment>
<comment type="tissue specificity">
    <text evidence="1">Expressed in stems, at higher levels in roots, and hardly detectable in leaves.</text>
</comment>
<comment type="developmental stage">
    <text evidence="1">Only detected at and after 15 days after pollination and remains at moderate level.</text>
</comment>
<comment type="similarity">
    <text evidence="2">Belongs to the carbohydrate kinase PfkB family.</text>
</comment>
<gene>
    <name type="primary">FRK1</name>
</gene>